<protein>
    <recommendedName>
        <fullName evidence="1">Small ribosomal subunit protein uS10</fullName>
    </recommendedName>
    <alternativeName>
        <fullName evidence="2">30S ribosomal protein S10</fullName>
    </alternativeName>
</protein>
<accession>A8LC57</accession>
<evidence type="ECO:0000255" key="1">
    <source>
        <dbReference type="HAMAP-Rule" id="MF_00508"/>
    </source>
</evidence>
<evidence type="ECO:0000305" key="2"/>
<gene>
    <name evidence="1" type="primary">rpsJ</name>
    <name type="ordered locus">Franean1_6050</name>
</gene>
<reference key="1">
    <citation type="journal article" date="2007" name="Genome Res.">
        <title>Genome characteristics of facultatively symbiotic Frankia sp. strains reflect host range and host plant biogeography.</title>
        <authorList>
            <person name="Normand P."/>
            <person name="Lapierre P."/>
            <person name="Tisa L.S."/>
            <person name="Gogarten J.P."/>
            <person name="Alloisio N."/>
            <person name="Bagnarol E."/>
            <person name="Bassi C.A."/>
            <person name="Berry A.M."/>
            <person name="Bickhart D.M."/>
            <person name="Choisne N."/>
            <person name="Couloux A."/>
            <person name="Cournoyer B."/>
            <person name="Cruveiller S."/>
            <person name="Daubin V."/>
            <person name="Demange N."/>
            <person name="Francino M.P."/>
            <person name="Goltsman E."/>
            <person name="Huang Y."/>
            <person name="Kopp O.R."/>
            <person name="Labarre L."/>
            <person name="Lapidus A."/>
            <person name="Lavire C."/>
            <person name="Marechal J."/>
            <person name="Martinez M."/>
            <person name="Mastronunzio J.E."/>
            <person name="Mullin B.C."/>
            <person name="Niemann J."/>
            <person name="Pujic P."/>
            <person name="Rawnsley T."/>
            <person name="Rouy Z."/>
            <person name="Schenowitz C."/>
            <person name="Sellstedt A."/>
            <person name="Tavares F."/>
            <person name="Tomkins J.P."/>
            <person name="Vallenet D."/>
            <person name="Valverde C."/>
            <person name="Wall L.G."/>
            <person name="Wang Y."/>
            <person name="Medigue C."/>
            <person name="Benson D.R."/>
        </authorList>
    </citation>
    <scope>NUCLEOTIDE SEQUENCE [LARGE SCALE GENOMIC DNA]</scope>
    <source>
        <strain>EAN1pec</strain>
    </source>
</reference>
<sequence>MAAQKIRIRLKAYDHEVIDSSARKIVETVTRTGAQVAGPVPLPTEKNVYCVIRSPHKYKDSREHFEMRTHKRLIDILDPTPKTVDSLMRLDLPAGVDIEIKL</sequence>
<comment type="function">
    <text evidence="1">Involved in the binding of tRNA to the ribosomes.</text>
</comment>
<comment type="subunit">
    <text evidence="1">Part of the 30S ribosomal subunit.</text>
</comment>
<comment type="similarity">
    <text evidence="1">Belongs to the universal ribosomal protein uS10 family.</text>
</comment>
<feature type="chain" id="PRO_1000127128" description="Small ribosomal subunit protein uS10">
    <location>
        <begin position="1"/>
        <end position="102"/>
    </location>
</feature>
<organism>
    <name type="scientific">Parafrankia sp. (strain EAN1pec)</name>
    <dbReference type="NCBI Taxonomy" id="298653"/>
    <lineage>
        <taxon>Bacteria</taxon>
        <taxon>Bacillati</taxon>
        <taxon>Actinomycetota</taxon>
        <taxon>Actinomycetes</taxon>
        <taxon>Frankiales</taxon>
        <taxon>Frankiaceae</taxon>
        <taxon>Parafrankia</taxon>
    </lineage>
</organism>
<keyword id="KW-0687">Ribonucleoprotein</keyword>
<keyword id="KW-0689">Ribosomal protein</keyword>
<proteinExistence type="inferred from homology"/>
<dbReference type="EMBL" id="CP000820">
    <property type="protein sequence ID" value="ABW15394.1"/>
    <property type="molecule type" value="Genomic_DNA"/>
</dbReference>
<dbReference type="RefSeq" id="WP_006539131.1">
    <property type="nucleotide sequence ID" value="NC_009921.1"/>
</dbReference>
<dbReference type="SMR" id="A8LC57"/>
<dbReference type="STRING" id="298653.Franean1_6050"/>
<dbReference type="KEGG" id="fre:Franean1_6050"/>
<dbReference type="eggNOG" id="COG0051">
    <property type="taxonomic scope" value="Bacteria"/>
</dbReference>
<dbReference type="HOGENOM" id="CLU_122625_1_3_11"/>
<dbReference type="GO" id="GO:1990904">
    <property type="term" value="C:ribonucleoprotein complex"/>
    <property type="evidence" value="ECO:0007669"/>
    <property type="project" value="UniProtKB-KW"/>
</dbReference>
<dbReference type="GO" id="GO:0005840">
    <property type="term" value="C:ribosome"/>
    <property type="evidence" value="ECO:0007669"/>
    <property type="project" value="UniProtKB-KW"/>
</dbReference>
<dbReference type="GO" id="GO:0003735">
    <property type="term" value="F:structural constituent of ribosome"/>
    <property type="evidence" value="ECO:0007669"/>
    <property type="project" value="InterPro"/>
</dbReference>
<dbReference type="GO" id="GO:0000049">
    <property type="term" value="F:tRNA binding"/>
    <property type="evidence" value="ECO:0007669"/>
    <property type="project" value="UniProtKB-UniRule"/>
</dbReference>
<dbReference type="GO" id="GO:0006412">
    <property type="term" value="P:translation"/>
    <property type="evidence" value="ECO:0007669"/>
    <property type="project" value="UniProtKB-UniRule"/>
</dbReference>
<dbReference type="FunFam" id="3.30.70.600:FF:000001">
    <property type="entry name" value="30S ribosomal protein S10"/>
    <property type="match status" value="1"/>
</dbReference>
<dbReference type="Gene3D" id="3.30.70.600">
    <property type="entry name" value="Ribosomal protein S10 domain"/>
    <property type="match status" value="1"/>
</dbReference>
<dbReference type="HAMAP" id="MF_00508">
    <property type="entry name" value="Ribosomal_uS10"/>
    <property type="match status" value="1"/>
</dbReference>
<dbReference type="InterPro" id="IPR001848">
    <property type="entry name" value="Ribosomal_uS10"/>
</dbReference>
<dbReference type="InterPro" id="IPR018268">
    <property type="entry name" value="Ribosomal_uS10_CS"/>
</dbReference>
<dbReference type="InterPro" id="IPR027486">
    <property type="entry name" value="Ribosomal_uS10_dom"/>
</dbReference>
<dbReference type="InterPro" id="IPR036838">
    <property type="entry name" value="Ribosomal_uS10_dom_sf"/>
</dbReference>
<dbReference type="NCBIfam" id="NF001861">
    <property type="entry name" value="PRK00596.1"/>
    <property type="match status" value="1"/>
</dbReference>
<dbReference type="NCBIfam" id="TIGR01049">
    <property type="entry name" value="rpsJ_bact"/>
    <property type="match status" value="1"/>
</dbReference>
<dbReference type="PANTHER" id="PTHR11700">
    <property type="entry name" value="30S RIBOSOMAL PROTEIN S10 FAMILY MEMBER"/>
    <property type="match status" value="1"/>
</dbReference>
<dbReference type="Pfam" id="PF00338">
    <property type="entry name" value="Ribosomal_S10"/>
    <property type="match status" value="1"/>
</dbReference>
<dbReference type="PRINTS" id="PR00971">
    <property type="entry name" value="RIBOSOMALS10"/>
</dbReference>
<dbReference type="SMART" id="SM01403">
    <property type="entry name" value="Ribosomal_S10"/>
    <property type="match status" value="1"/>
</dbReference>
<dbReference type="SUPFAM" id="SSF54999">
    <property type="entry name" value="Ribosomal protein S10"/>
    <property type="match status" value="1"/>
</dbReference>
<dbReference type="PROSITE" id="PS00361">
    <property type="entry name" value="RIBOSOMAL_S10"/>
    <property type="match status" value="1"/>
</dbReference>
<name>RS10_PARS2</name>